<gene>
    <name type="primary">RPS12C</name>
    <name type="ordered locus">At2g32060</name>
    <name type="ORF">F22D22.19</name>
</gene>
<protein>
    <recommendedName>
        <fullName evidence="1">Small ribosomal subunit protein eS12y</fullName>
    </recommendedName>
    <alternativeName>
        <fullName>40S ribosomal protein S12-2</fullName>
    </alternativeName>
</protein>
<accession>Q9SKZ3</accession>
<proteinExistence type="evidence at protein level"/>
<reference key="1">
    <citation type="journal article" date="1999" name="Nature">
        <title>Sequence and analysis of chromosome 2 of the plant Arabidopsis thaliana.</title>
        <authorList>
            <person name="Lin X."/>
            <person name="Kaul S."/>
            <person name="Rounsley S.D."/>
            <person name="Shea T.P."/>
            <person name="Benito M.-I."/>
            <person name="Town C.D."/>
            <person name="Fujii C.Y."/>
            <person name="Mason T.M."/>
            <person name="Bowman C.L."/>
            <person name="Barnstead M.E."/>
            <person name="Feldblyum T.V."/>
            <person name="Buell C.R."/>
            <person name="Ketchum K.A."/>
            <person name="Lee J.J."/>
            <person name="Ronning C.M."/>
            <person name="Koo H.L."/>
            <person name="Moffat K.S."/>
            <person name="Cronin L.A."/>
            <person name="Shen M."/>
            <person name="Pai G."/>
            <person name="Van Aken S."/>
            <person name="Umayam L."/>
            <person name="Tallon L.J."/>
            <person name="Gill J.E."/>
            <person name="Adams M.D."/>
            <person name="Carrera A.J."/>
            <person name="Creasy T.H."/>
            <person name="Goodman H.M."/>
            <person name="Somerville C.R."/>
            <person name="Copenhaver G.P."/>
            <person name="Preuss D."/>
            <person name="Nierman W.C."/>
            <person name="White O."/>
            <person name="Eisen J.A."/>
            <person name="Salzberg S.L."/>
            <person name="Fraser C.M."/>
            <person name="Venter J.C."/>
        </authorList>
    </citation>
    <scope>NUCLEOTIDE SEQUENCE [LARGE SCALE GENOMIC DNA]</scope>
    <source>
        <strain>cv. Columbia</strain>
    </source>
</reference>
<reference key="2">
    <citation type="journal article" date="2017" name="Plant J.">
        <title>Araport11: a complete reannotation of the Arabidopsis thaliana reference genome.</title>
        <authorList>
            <person name="Cheng C.Y."/>
            <person name="Krishnakumar V."/>
            <person name="Chan A.P."/>
            <person name="Thibaud-Nissen F."/>
            <person name="Schobel S."/>
            <person name="Town C.D."/>
        </authorList>
    </citation>
    <scope>GENOME REANNOTATION</scope>
    <source>
        <strain>cv. Columbia</strain>
    </source>
</reference>
<reference key="3">
    <citation type="journal article" date="2003" name="Science">
        <title>Empirical analysis of transcriptional activity in the Arabidopsis genome.</title>
        <authorList>
            <person name="Yamada K."/>
            <person name="Lim J."/>
            <person name="Dale J.M."/>
            <person name="Chen H."/>
            <person name="Shinn P."/>
            <person name="Palm C.J."/>
            <person name="Southwick A.M."/>
            <person name="Wu H.C."/>
            <person name="Kim C.J."/>
            <person name="Nguyen M."/>
            <person name="Pham P.K."/>
            <person name="Cheuk R.F."/>
            <person name="Karlin-Newmann G."/>
            <person name="Liu S.X."/>
            <person name="Lam B."/>
            <person name="Sakano H."/>
            <person name="Wu T."/>
            <person name="Yu G."/>
            <person name="Miranda M."/>
            <person name="Quach H.L."/>
            <person name="Tripp M."/>
            <person name="Chang C.H."/>
            <person name="Lee J.M."/>
            <person name="Toriumi M.J."/>
            <person name="Chan M.M."/>
            <person name="Tang C.C."/>
            <person name="Onodera C.S."/>
            <person name="Deng J.M."/>
            <person name="Akiyama K."/>
            <person name="Ansari Y."/>
            <person name="Arakawa T."/>
            <person name="Banh J."/>
            <person name="Banno F."/>
            <person name="Bowser L."/>
            <person name="Brooks S.Y."/>
            <person name="Carninci P."/>
            <person name="Chao Q."/>
            <person name="Choy N."/>
            <person name="Enju A."/>
            <person name="Goldsmith A.D."/>
            <person name="Gurjal M."/>
            <person name="Hansen N.F."/>
            <person name="Hayashizaki Y."/>
            <person name="Johnson-Hopson C."/>
            <person name="Hsuan V.W."/>
            <person name="Iida K."/>
            <person name="Karnes M."/>
            <person name="Khan S."/>
            <person name="Koesema E."/>
            <person name="Ishida J."/>
            <person name="Jiang P.X."/>
            <person name="Jones T."/>
            <person name="Kawai J."/>
            <person name="Kamiya A."/>
            <person name="Meyers C."/>
            <person name="Nakajima M."/>
            <person name="Narusaka M."/>
            <person name="Seki M."/>
            <person name="Sakurai T."/>
            <person name="Satou M."/>
            <person name="Tamse R."/>
            <person name="Vaysberg M."/>
            <person name="Wallender E.K."/>
            <person name="Wong C."/>
            <person name="Yamamura Y."/>
            <person name="Yuan S."/>
            <person name="Shinozaki K."/>
            <person name="Davis R.W."/>
            <person name="Theologis A."/>
            <person name="Ecker J.R."/>
        </authorList>
    </citation>
    <scope>NUCLEOTIDE SEQUENCE [LARGE SCALE MRNA]</scope>
    <source>
        <strain>cv. Columbia</strain>
    </source>
</reference>
<reference key="4">
    <citation type="submission" date="2002-03" db="EMBL/GenBank/DDBJ databases">
        <title>Full-length cDNA from Arabidopsis thaliana.</title>
        <authorList>
            <person name="Brover V.V."/>
            <person name="Troukhan M.E."/>
            <person name="Alexandrov N.A."/>
            <person name="Lu Y.-P."/>
            <person name="Flavell R.B."/>
            <person name="Feldmann K.A."/>
        </authorList>
    </citation>
    <scope>NUCLEOTIDE SEQUENCE [LARGE SCALE MRNA]</scope>
</reference>
<reference key="5">
    <citation type="journal article" date="2001" name="Plant Physiol.">
        <title>The organization of cytoplasmic ribosomal protein genes in the Arabidopsis genome.</title>
        <authorList>
            <person name="Barakat A."/>
            <person name="Szick-Miranda K."/>
            <person name="Chang I.-F."/>
            <person name="Guyot R."/>
            <person name="Blanc G."/>
            <person name="Cooke R."/>
            <person name="Delseny M."/>
            <person name="Bailey-Serres J."/>
        </authorList>
    </citation>
    <scope>GENE FAMILY ORGANIZATION</scope>
    <scope>NOMENCLATURE</scope>
</reference>
<reference key="6">
    <citation type="journal article" date="2012" name="Mol. Cell. Proteomics">
        <title>Comparative large-scale characterisation of plant vs. mammal proteins reveals similar and idiosyncratic N-alpha acetylation features.</title>
        <authorList>
            <person name="Bienvenut W.V."/>
            <person name="Sumpton D."/>
            <person name="Martinez A."/>
            <person name="Lilla S."/>
            <person name="Espagne C."/>
            <person name="Meinnel T."/>
            <person name="Giglione C."/>
        </authorList>
    </citation>
    <scope>ACETYLATION [LARGE SCALE ANALYSIS] AT SER-2</scope>
    <scope>CLEAVAGE OF INITIATOR METHIONINE [LARGE SCALE ANALYSIS]</scope>
    <scope>IDENTIFICATION BY MASS SPECTROMETRY [LARGE SCALE ANALYSIS]</scope>
</reference>
<reference key="7">
    <citation type="journal article" date="2023" name="Plant Cell">
        <title>An updated nomenclature for plant ribosomal protein genes.</title>
        <authorList>
            <person name="Scarpin M.R."/>
            <person name="Busche M."/>
            <person name="Martinez R.E."/>
            <person name="Harper L.C."/>
            <person name="Reiser L."/>
            <person name="Szakonyi D."/>
            <person name="Merchante C."/>
            <person name="Lan T."/>
            <person name="Xiong W."/>
            <person name="Mo B."/>
            <person name="Tang G."/>
            <person name="Chen X."/>
            <person name="Bailey-Serres J."/>
            <person name="Browning K.S."/>
            <person name="Brunkard J.O."/>
        </authorList>
    </citation>
    <scope>NOMENCLATURE</scope>
</reference>
<comment type="similarity">
    <text evidence="2">Belongs to the eukaryotic ribosomal protein eS12 family.</text>
</comment>
<sequence length="144" mass="15329">MSGDEAVAAPVVPPVAEAAVIPEDMDVSTALELTVRKSRAYGGVVRGLHESAKLIEKRNAQLCVLAEDCNQPDYVKLVKALCADHSIKLLTVPSAKTLGEWAGLCKIDSEGNARKVVGCSCLVIKDFGEETTALNIVKKHLDSN</sequence>
<organism>
    <name type="scientific">Arabidopsis thaliana</name>
    <name type="common">Mouse-ear cress</name>
    <dbReference type="NCBI Taxonomy" id="3702"/>
    <lineage>
        <taxon>Eukaryota</taxon>
        <taxon>Viridiplantae</taxon>
        <taxon>Streptophyta</taxon>
        <taxon>Embryophyta</taxon>
        <taxon>Tracheophyta</taxon>
        <taxon>Spermatophyta</taxon>
        <taxon>Magnoliopsida</taxon>
        <taxon>eudicotyledons</taxon>
        <taxon>Gunneridae</taxon>
        <taxon>Pentapetalae</taxon>
        <taxon>rosids</taxon>
        <taxon>malvids</taxon>
        <taxon>Brassicales</taxon>
        <taxon>Brassicaceae</taxon>
        <taxon>Camelineae</taxon>
        <taxon>Arabidopsis</taxon>
    </lineage>
</organism>
<evidence type="ECO:0000303" key="1">
    <source>
    </source>
</evidence>
<evidence type="ECO:0000305" key="2"/>
<evidence type="ECO:0007744" key="3">
    <source>
    </source>
</evidence>
<name>RS122_ARATH</name>
<keyword id="KW-0007">Acetylation</keyword>
<keyword id="KW-1185">Reference proteome</keyword>
<keyword id="KW-0687">Ribonucleoprotein</keyword>
<keyword id="KW-0689">Ribosomal protein</keyword>
<feature type="initiator methionine" description="Removed" evidence="3">
    <location>
        <position position="1"/>
    </location>
</feature>
<feature type="chain" id="PRO_0000122335" description="Small ribosomal subunit protein eS12y">
    <location>
        <begin position="2"/>
        <end position="144"/>
    </location>
</feature>
<feature type="modified residue" description="N-acetylserine" evidence="3">
    <location>
        <position position="2"/>
    </location>
</feature>
<dbReference type="EMBL" id="AC006223">
    <property type="protein sequence ID" value="AAD15398.1"/>
    <property type="molecule type" value="Genomic_DNA"/>
</dbReference>
<dbReference type="EMBL" id="CP002685">
    <property type="protein sequence ID" value="AEC08627.1"/>
    <property type="molecule type" value="Genomic_DNA"/>
</dbReference>
<dbReference type="EMBL" id="CP002685">
    <property type="protein sequence ID" value="AEC08628.1"/>
    <property type="molecule type" value="Genomic_DNA"/>
</dbReference>
<dbReference type="EMBL" id="CP002685">
    <property type="protein sequence ID" value="AEC08629.1"/>
    <property type="molecule type" value="Genomic_DNA"/>
</dbReference>
<dbReference type="EMBL" id="AY050324">
    <property type="protein sequence ID" value="AAK91341.1"/>
    <property type="molecule type" value="mRNA"/>
</dbReference>
<dbReference type="EMBL" id="AY133636">
    <property type="protein sequence ID" value="AAM91466.1"/>
    <property type="molecule type" value="mRNA"/>
</dbReference>
<dbReference type="EMBL" id="AY085161">
    <property type="protein sequence ID" value="AAM61714.1"/>
    <property type="molecule type" value="mRNA"/>
</dbReference>
<dbReference type="PIR" id="E84728">
    <property type="entry name" value="E84728"/>
</dbReference>
<dbReference type="RefSeq" id="NP_001318332.1">
    <property type="nucleotide sequence ID" value="NM_001336369.1"/>
</dbReference>
<dbReference type="RefSeq" id="NP_180766.1">
    <property type="nucleotide sequence ID" value="NM_128766.5"/>
</dbReference>
<dbReference type="RefSeq" id="NP_850180.1">
    <property type="nucleotide sequence ID" value="NM_179849.4"/>
</dbReference>
<dbReference type="SMR" id="Q9SKZ3"/>
<dbReference type="BioGRID" id="3113">
    <property type="interactions" value="1"/>
</dbReference>
<dbReference type="FunCoup" id="Q9SKZ3">
    <property type="interactions" value="3137"/>
</dbReference>
<dbReference type="STRING" id="3702.Q9SKZ3"/>
<dbReference type="iPTMnet" id="Q9SKZ3"/>
<dbReference type="PaxDb" id="3702-AT2G32060.1"/>
<dbReference type="ProteomicsDB" id="226777"/>
<dbReference type="DNASU" id="817766"/>
<dbReference type="EnsemblPlants" id="AT2G32060.1">
    <property type="protein sequence ID" value="AT2G32060.1"/>
    <property type="gene ID" value="AT2G32060"/>
</dbReference>
<dbReference type="EnsemblPlants" id="AT2G32060.2">
    <property type="protein sequence ID" value="AT2G32060.2"/>
    <property type="gene ID" value="AT2G32060"/>
</dbReference>
<dbReference type="EnsemblPlants" id="AT2G32060.3">
    <property type="protein sequence ID" value="AT2G32060.3"/>
    <property type="gene ID" value="AT2G32060"/>
</dbReference>
<dbReference type="GeneID" id="817766"/>
<dbReference type="Gramene" id="AT2G32060.1">
    <property type="protein sequence ID" value="AT2G32060.1"/>
    <property type="gene ID" value="AT2G32060"/>
</dbReference>
<dbReference type="Gramene" id="AT2G32060.2">
    <property type="protein sequence ID" value="AT2G32060.2"/>
    <property type="gene ID" value="AT2G32060"/>
</dbReference>
<dbReference type="Gramene" id="AT2G32060.3">
    <property type="protein sequence ID" value="AT2G32060.3"/>
    <property type="gene ID" value="AT2G32060"/>
</dbReference>
<dbReference type="KEGG" id="ath:AT2G32060"/>
<dbReference type="Araport" id="AT2G32060"/>
<dbReference type="TAIR" id="AT2G32060"/>
<dbReference type="eggNOG" id="KOG3406">
    <property type="taxonomic scope" value="Eukaryota"/>
</dbReference>
<dbReference type="HOGENOM" id="CLU_110343_1_1_1"/>
<dbReference type="InParanoid" id="Q9SKZ3"/>
<dbReference type="OMA" id="CAEHQIP"/>
<dbReference type="OrthoDB" id="10249311at2759"/>
<dbReference type="PhylomeDB" id="Q9SKZ3"/>
<dbReference type="CD-CODE" id="4299E36E">
    <property type="entry name" value="Nucleolus"/>
</dbReference>
<dbReference type="PRO" id="PR:Q9SKZ3"/>
<dbReference type="Proteomes" id="UP000006548">
    <property type="component" value="Chromosome 2"/>
</dbReference>
<dbReference type="ExpressionAtlas" id="Q9SKZ3">
    <property type="expression patterns" value="baseline and differential"/>
</dbReference>
<dbReference type="GO" id="GO:0022626">
    <property type="term" value="C:cytosolic ribosome"/>
    <property type="evidence" value="ECO:0007005"/>
    <property type="project" value="TAIR"/>
</dbReference>
<dbReference type="GO" id="GO:0022627">
    <property type="term" value="C:cytosolic small ribosomal subunit"/>
    <property type="evidence" value="ECO:0007005"/>
    <property type="project" value="TAIR"/>
</dbReference>
<dbReference type="GO" id="GO:0005634">
    <property type="term" value="C:nucleus"/>
    <property type="evidence" value="ECO:0007005"/>
    <property type="project" value="TAIR"/>
</dbReference>
<dbReference type="GO" id="GO:0005777">
    <property type="term" value="C:peroxisome"/>
    <property type="evidence" value="ECO:0007005"/>
    <property type="project" value="TAIR"/>
</dbReference>
<dbReference type="GO" id="GO:0003735">
    <property type="term" value="F:structural constituent of ribosome"/>
    <property type="evidence" value="ECO:0000314"/>
    <property type="project" value="CAFA"/>
</dbReference>
<dbReference type="GO" id="GO:0006412">
    <property type="term" value="P:translation"/>
    <property type="evidence" value="ECO:0007669"/>
    <property type="project" value="InterPro"/>
</dbReference>
<dbReference type="FunFam" id="3.30.1330.30:FF:000013">
    <property type="entry name" value="40S ribosomal protein S12"/>
    <property type="match status" value="1"/>
</dbReference>
<dbReference type="Gene3D" id="3.30.1330.30">
    <property type="match status" value="1"/>
</dbReference>
<dbReference type="InterPro" id="IPR029064">
    <property type="entry name" value="Ribosomal_eL30-like_sf"/>
</dbReference>
<dbReference type="InterPro" id="IPR004038">
    <property type="entry name" value="Ribosomal_eL8/eL30/eS12/Gad45"/>
</dbReference>
<dbReference type="InterPro" id="IPR000530">
    <property type="entry name" value="Ribosomal_eS12"/>
</dbReference>
<dbReference type="InterPro" id="IPR047860">
    <property type="entry name" value="Ribosomal_eS12_CS"/>
</dbReference>
<dbReference type="PANTHER" id="PTHR11843">
    <property type="entry name" value="40S RIBOSOMAL PROTEIN S12"/>
    <property type="match status" value="1"/>
</dbReference>
<dbReference type="Pfam" id="PF01248">
    <property type="entry name" value="Ribosomal_L7Ae"/>
    <property type="match status" value="1"/>
</dbReference>
<dbReference type="PRINTS" id="PR00972">
    <property type="entry name" value="RIBSOMALS12E"/>
</dbReference>
<dbReference type="SUPFAM" id="SSF55315">
    <property type="entry name" value="L30e-like"/>
    <property type="match status" value="1"/>
</dbReference>
<dbReference type="PROSITE" id="PS01189">
    <property type="entry name" value="RIBOSOMAL_S12E"/>
    <property type="match status" value="1"/>
</dbReference>